<protein>
    <recommendedName>
        <fullName>tRNA (guanine-N(1)-)-methyltransferase</fullName>
        <ecNumber>2.1.1.228</ecNumber>
    </recommendedName>
    <alternativeName>
        <fullName>M1G-methyltransferase</fullName>
    </alternativeName>
    <alternativeName>
        <fullName>tRNA [GM37] methyltransferase</fullName>
    </alternativeName>
</protein>
<feature type="chain" id="PRO_0000060470" description="tRNA (guanine-N(1)-)-methyltransferase">
    <location>
        <begin position="1"/>
        <end position="243"/>
    </location>
</feature>
<feature type="binding site" evidence="1">
    <location>
        <position position="108"/>
    </location>
    <ligand>
        <name>S-adenosyl-L-methionine</name>
        <dbReference type="ChEBI" id="CHEBI:59789"/>
    </ligand>
</feature>
<feature type="binding site" evidence="1">
    <location>
        <begin position="127"/>
        <end position="132"/>
    </location>
    <ligand>
        <name>S-adenosyl-L-methionine</name>
        <dbReference type="ChEBI" id="CHEBI:59789"/>
    </ligand>
</feature>
<proteinExistence type="inferred from homology"/>
<dbReference type="EC" id="2.1.1.228"/>
<dbReference type="EMBL" id="AE004092">
    <property type="protein sequence ID" value="AAK33777.1"/>
    <property type="molecule type" value="Genomic_DNA"/>
</dbReference>
<dbReference type="EMBL" id="CP000017">
    <property type="protein sequence ID" value="AAZ51274.1"/>
    <property type="molecule type" value="Genomic_DNA"/>
</dbReference>
<dbReference type="RefSeq" id="NP_269056.1">
    <property type="nucleotide sequence ID" value="NC_002737.2"/>
</dbReference>
<dbReference type="SMR" id="Q9A0B6"/>
<dbReference type="PaxDb" id="1314-HKU360_00669"/>
<dbReference type="KEGG" id="spy:SPy_0849"/>
<dbReference type="KEGG" id="spz:M5005_Spy0656"/>
<dbReference type="PATRIC" id="fig|160490.10.peg.726"/>
<dbReference type="HOGENOM" id="CLU_047363_0_1_9"/>
<dbReference type="OMA" id="ILCGHYK"/>
<dbReference type="Proteomes" id="UP000000750">
    <property type="component" value="Chromosome"/>
</dbReference>
<dbReference type="GO" id="GO:0005829">
    <property type="term" value="C:cytosol"/>
    <property type="evidence" value="ECO:0007669"/>
    <property type="project" value="TreeGrafter"/>
</dbReference>
<dbReference type="GO" id="GO:0052906">
    <property type="term" value="F:tRNA (guanine(37)-N1)-methyltransferase activity"/>
    <property type="evidence" value="ECO:0007669"/>
    <property type="project" value="UniProtKB-UniRule"/>
</dbReference>
<dbReference type="GO" id="GO:0002939">
    <property type="term" value="P:tRNA N1-guanine methylation"/>
    <property type="evidence" value="ECO:0007669"/>
    <property type="project" value="TreeGrafter"/>
</dbReference>
<dbReference type="CDD" id="cd18080">
    <property type="entry name" value="TrmD-like"/>
    <property type="match status" value="1"/>
</dbReference>
<dbReference type="FunFam" id="1.10.1270.20:FF:000001">
    <property type="entry name" value="tRNA (guanine-N(1)-)-methyltransferase"/>
    <property type="match status" value="1"/>
</dbReference>
<dbReference type="FunFam" id="3.40.1280.10:FF:000001">
    <property type="entry name" value="tRNA (guanine-N(1)-)-methyltransferase"/>
    <property type="match status" value="1"/>
</dbReference>
<dbReference type="Gene3D" id="3.40.1280.10">
    <property type="match status" value="1"/>
</dbReference>
<dbReference type="Gene3D" id="1.10.1270.20">
    <property type="entry name" value="tRNA(m1g37)methyltransferase, domain 2"/>
    <property type="match status" value="1"/>
</dbReference>
<dbReference type="HAMAP" id="MF_00605">
    <property type="entry name" value="TrmD"/>
    <property type="match status" value="1"/>
</dbReference>
<dbReference type="InterPro" id="IPR029028">
    <property type="entry name" value="Alpha/beta_knot_MTases"/>
</dbReference>
<dbReference type="InterPro" id="IPR023148">
    <property type="entry name" value="tRNA_m1G_MeTrfase_C_sf"/>
</dbReference>
<dbReference type="InterPro" id="IPR002649">
    <property type="entry name" value="tRNA_m1G_MeTrfase_TrmD"/>
</dbReference>
<dbReference type="InterPro" id="IPR029026">
    <property type="entry name" value="tRNA_m1G_MTases_N"/>
</dbReference>
<dbReference type="InterPro" id="IPR016009">
    <property type="entry name" value="tRNA_MeTrfase_TRMD/TRM10"/>
</dbReference>
<dbReference type="NCBIfam" id="NF000648">
    <property type="entry name" value="PRK00026.1"/>
    <property type="match status" value="1"/>
</dbReference>
<dbReference type="NCBIfam" id="TIGR00088">
    <property type="entry name" value="trmD"/>
    <property type="match status" value="1"/>
</dbReference>
<dbReference type="PANTHER" id="PTHR46417">
    <property type="entry name" value="TRNA (GUANINE-N(1)-)-METHYLTRANSFERASE"/>
    <property type="match status" value="1"/>
</dbReference>
<dbReference type="PANTHER" id="PTHR46417:SF1">
    <property type="entry name" value="TRNA (GUANINE-N(1)-)-METHYLTRANSFERASE"/>
    <property type="match status" value="1"/>
</dbReference>
<dbReference type="Pfam" id="PF01746">
    <property type="entry name" value="tRNA_m1G_MT"/>
    <property type="match status" value="1"/>
</dbReference>
<dbReference type="PIRSF" id="PIRSF000386">
    <property type="entry name" value="tRNA_mtase"/>
    <property type="match status" value="1"/>
</dbReference>
<dbReference type="SUPFAM" id="SSF75217">
    <property type="entry name" value="alpha/beta knot"/>
    <property type="match status" value="1"/>
</dbReference>
<organism>
    <name type="scientific">Streptococcus pyogenes serotype M1</name>
    <dbReference type="NCBI Taxonomy" id="301447"/>
    <lineage>
        <taxon>Bacteria</taxon>
        <taxon>Bacillati</taxon>
        <taxon>Bacillota</taxon>
        <taxon>Bacilli</taxon>
        <taxon>Lactobacillales</taxon>
        <taxon>Streptococcaceae</taxon>
        <taxon>Streptococcus</taxon>
    </lineage>
</organism>
<comment type="function">
    <text evidence="1">Specifically methylates guanosine-37 in various tRNAs.</text>
</comment>
<comment type="catalytic activity">
    <reaction>
        <text>guanosine(37) in tRNA + S-adenosyl-L-methionine = N(1)-methylguanosine(37) in tRNA + S-adenosyl-L-homocysteine + H(+)</text>
        <dbReference type="Rhea" id="RHEA:36899"/>
        <dbReference type="Rhea" id="RHEA-COMP:10145"/>
        <dbReference type="Rhea" id="RHEA-COMP:10147"/>
        <dbReference type="ChEBI" id="CHEBI:15378"/>
        <dbReference type="ChEBI" id="CHEBI:57856"/>
        <dbReference type="ChEBI" id="CHEBI:59789"/>
        <dbReference type="ChEBI" id="CHEBI:73542"/>
        <dbReference type="ChEBI" id="CHEBI:74269"/>
        <dbReference type="EC" id="2.1.1.228"/>
    </reaction>
</comment>
<comment type="subunit">
    <text evidence="1">Homodimer.</text>
</comment>
<comment type="subcellular location">
    <subcellularLocation>
        <location evidence="2">Cytoplasm</location>
    </subcellularLocation>
</comment>
<comment type="similarity">
    <text evidence="2">Belongs to the RNA methyltransferase TrmD family.</text>
</comment>
<gene>
    <name type="primary">trmD</name>
    <name type="ordered locus">SPy_0849</name>
    <name type="ordered locus">M5005_Spy0656</name>
</gene>
<reference key="1">
    <citation type="journal article" date="2001" name="Proc. Natl. Acad. Sci. U.S.A.">
        <title>Complete genome sequence of an M1 strain of Streptococcus pyogenes.</title>
        <authorList>
            <person name="Ferretti J.J."/>
            <person name="McShan W.M."/>
            <person name="Ajdic D.J."/>
            <person name="Savic D.J."/>
            <person name="Savic G."/>
            <person name="Lyon K."/>
            <person name="Primeaux C."/>
            <person name="Sezate S."/>
            <person name="Suvorov A.N."/>
            <person name="Kenton S."/>
            <person name="Lai H.S."/>
            <person name="Lin S.P."/>
            <person name="Qian Y."/>
            <person name="Jia H.G."/>
            <person name="Najar F.Z."/>
            <person name="Ren Q."/>
            <person name="Zhu H."/>
            <person name="Song L."/>
            <person name="White J."/>
            <person name="Yuan X."/>
            <person name="Clifton S.W."/>
            <person name="Roe B.A."/>
            <person name="McLaughlin R.E."/>
        </authorList>
    </citation>
    <scope>NUCLEOTIDE SEQUENCE [LARGE SCALE GENOMIC DNA]</scope>
    <source>
        <strain>ATCC 700294 / SF370 / Serotype M1</strain>
    </source>
</reference>
<reference key="2">
    <citation type="journal article" date="2005" name="J. Infect. Dis.">
        <title>Evolutionary origin and emergence of a highly successful clone of serotype M1 group A Streptococcus involved multiple horizontal gene transfer events.</title>
        <authorList>
            <person name="Sumby P."/>
            <person name="Porcella S.F."/>
            <person name="Madrigal A.G."/>
            <person name="Barbian K.D."/>
            <person name="Virtaneva K."/>
            <person name="Ricklefs S.M."/>
            <person name="Sturdevant D.E."/>
            <person name="Graham M.R."/>
            <person name="Vuopio-Varkila J."/>
            <person name="Hoe N.P."/>
            <person name="Musser J.M."/>
        </authorList>
    </citation>
    <scope>NUCLEOTIDE SEQUENCE [LARGE SCALE GENOMIC DNA]</scope>
    <source>
        <strain>ATCC BAA-947 / MGAS5005 / Serotype M1</strain>
    </source>
</reference>
<evidence type="ECO:0000250" key="1"/>
<evidence type="ECO:0000305" key="2"/>
<name>TRMD_STRP1</name>
<keyword id="KW-0963">Cytoplasm</keyword>
<keyword id="KW-0489">Methyltransferase</keyword>
<keyword id="KW-1185">Reference proteome</keyword>
<keyword id="KW-0949">S-adenosyl-L-methionine</keyword>
<keyword id="KW-0808">Transferase</keyword>
<keyword id="KW-0819">tRNA processing</keyword>
<accession>Q9A0B6</accession>
<accession>Q48ZE4</accession>
<sequence length="243" mass="27989">MKIDILTLFPEMFAPLEHSIVGKAKEKGLLDIHYHNFRDYAEKARHVDDEPYGGGQGMLLRAQPIFDTIEQIEAKKPRIILLDPAGKPFTQAYAEELALEEELIFICGHYEGYDERIKTLVTDEISLGDFVLTGGELAAMTMVDATVRLIPQVLGKESSHQDDSFSSGLLEYPQYTRPYDYRGMTVPDVLMSGHHERIRLWRLEESLKKTYLRRPDLLEHYNFSEEERKLLDKIKEALDQGED</sequence>